<evidence type="ECO:0000250" key="1"/>
<evidence type="ECO:0000250" key="2">
    <source>
        <dbReference type="UniProtKB" id="Q15084"/>
    </source>
</evidence>
<evidence type="ECO:0000255" key="3"/>
<evidence type="ECO:0000255" key="4">
    <source>
        <dbReference type="PROSITE-ProRule" id="PRU00691"/>
    </source>
</evidence>
<evidence type="ECO:0000256" key="5">
    <source>
        <dbReference type="SAM" id="MobiDB-lite"/>
    </source>
</evidence>
<evidence type="ECO:0000269" key="6">
    <source>
    </source>
</evidence>
<evidence type="ECO:0000303" key="7">
    <source>
    </source>
</evidence>
<evidence type="ECO:0000305" key="8"/>
<evidence type="ECO:0000312" key="9">
    <source>
        <dbReference type="WormBase" id="B0403.4"/>
    </source>
</evidence>
<accession>Q11067</accession>
<comment type="function">
    <text evidence="2 6">May function as a chaperone that inhibits aggregation of misfolded proteins (By similarity). May negatively regulate the unfolded protein response (UPR) through binding to UPR sensors (PubMed:24508390).</text>
</comment>
<comment type="catalytic activity">
    <reaction evidence="2">
        <text>Catalyzes the rearrangement of -S-S- bonds in proteins.</text>
        <dbReference type="EC" id="5.3.4.1"/>
    </reaction>
</comment>
<comment type="subcellular location">
    <subcellularLocation>
        <location evidence="2">Endoplasmic reticulum lumen</location>
    </subcellularLocation>
</comment>
<comment type="disruption phenotype">
    <text evidence="6">Lethal at the early stages of larval development. Arrested larvae are small and display molting defects. RNAi-mediated knockdown results in reduced fecundity, and in induction of the unfolded protein response.</text>
</comment>
<comment type="similarity">
    <text evidence="8">Belongs to the protein disulfide isomerase family.</text>
</comment>
<protein>
    <recommendedName>
        <fullName evidence="7">Protein disulfide-isomerase A6 homolog</fullName>
        <ecNumber evidence="2">5.3.4.1</ecNumber>
    </recommendedName>
</protein>
<sequence length="440" mass="47728">MALIKLLLASLAITSVCGMYSKKDDVVELTEANFQSKVINSDDIWIVEFYAPWCGHCKSLVPEYKKAASALKGVAKVGAVDMTQHQSVGGPYNVQGFPTLKIFGADKKKPTDYNGQRTAQAIADSVLAEAKKAVSARLGGKSSGSSSSGSGSGSGKRGGGGSGNEVVELTDANFEDLVLNSKDIWLVEFFAPWCGHCKSLEPQWKAAASELKGKVRLGALDATVHTVVANKFAIRGFPTIKYFAPGSDVSDAQDYDGGRQSSDIVAWASARAQENMPAPEVFEGINQQVVEDACKEKQLCIFAFLPHILDCQSECRNNYLAMLKEQSEKFKKNLWGWIWVEGAAQPALEESFEVGGFGYPAMTALNFRKNKYAVLKGSFGKDGIHEFLRDLSYGKGRTSSLRGDGFPKIQKTEKWDGKDGALPAEDDIDLSDIDLDKTEL</sequence>
<dbReference type="EC" id="5.3.4.1" evidence="2"/>
<dbReference type="EMBL" id="FO080188">
    <property type="protein sequence ID" value="CCD61843.1"/>
    <property type="molecule type" value="Genomic_DNA"/>
</dbReference>
<dbReference type="PIR" id="T15352">
    <property type="entry name" value="T15352"/>
</dbReference>
<dbReference type="RefSeq" id="NP_509190.1">
    <property type="nucleotide sequence ID" value="NM_076789.8"/>
</dbReference>
<dbReference type="SMR" id="Q11067"/>
<dbReference type="BioGRID" id="45900">
    <property type="interactions" value="9"/>
</dbReference>
<dbReference type="FunCoup" id="Q11067">
    <property type="interactions" value="2200"/>
</dbReference>
<dbReference type="STRING" id="6239.B0403.4.1"/>
<dbReference type="iPTMnet" id="Q11067"/>
<dbReference type="PaxDb" id="6239-B0403.4"/>
<dbReference type="PeptideAtlas" id="Q11067"/>
<dbReference type="EnsemblMetazoa" id="B0403.4.1">
    <property type="protein sequence ID" value="B0403.4.1"/>
    <property type="gene ID" value="WBGene00015168"/>
</dbReference>
<dbReference type="GeneID" id="180974"/>
<dbReference type="KEGG" id="cel:CELE_B0403.4"/>
<dbReference type="UCSC" id="B0403.4">
    <property type="organism name" value="c. elegans"/>
</dbReference>
<dbReference type="AGR" id="WB:WBGene00015168"/>
<dbReference type="CTD" id="180974"/>
<dbReference type="WormBase" id="B0403.4">
    <property type="protein sequence ID" value="CE03880"/>
    <property type="gene ID" value="WBGene00015168"/>
    <property type="gene designation" value="pdi-6"/>
</dbReference>
<dbReference type="eggNOG" id="KOG0191">
    <property type="taxonomic scope" value="Eukaryota"/>
</dbReference>
<dbReference type="GeneTree" id="ENSGT00940000155646"/>
<dbReference type="HOGENOM" id="CLU_030311_0_0_1"/>
<dbReference type="InParanoid" id="Q11067"/>
<dbReference type="OMA" id="KQKLWGW"/>
<dbReference type="OrthoDB" id="10264505at2759"/>
<dbReference type="PhylomeDB" id="Q11067"/>
<dbReference type="BRENDA" id="5.3.4.1">
    <property type="organism ID" value="1045"/>
</dbReference>
<dbReference type="Reactome" id="R-CEL-381426">
    <property type="pathway name" value="Regulation of Insulin-like Growth Factor (IGF) transport and uptake by Insulin-like Growth Factor Binding Proteins (IGFBPs)"/>
</dbReference>
<dbReference type="Reactome" id="R-CEL-8957275">
    <property type="pathway name" value="Post-translational protein phosphorylation"/>
</dbReference>
<dbReference type="PRO" id="PR:Q11067"/>
<dbReference type="Proteomes" id="UP000001940">
    <property type="component" value="Chromosome X"/>
</dbReference>
<dbReference type="Bgee" id="WBGene00015168">
    <property type="expression patterns" value="Expressed in pharyngeal muscle cell (C elegans) and 5 other cell types or tissues"/>
</dbReference>
<dbReference type="GO" id="GO:0005783">
    <property type="term" value="C:endoplasmic reticulum"/>
    <property type="evidence" value="ECO:0000318"/>
    <property type="project" value="GO_Central"/>
</dbReference>
<dbReference type="GO" id="GO:0005788">
    <property type="term" value="C:endoplasmic reticulum lumen"/>
    <property type="evidence" value="ECO:0007669"/>
    <property type="project" value="UniProtKB-SubCell"/>
</dbReference>
<dbReference type="GO" id="GO:0003756">
    <property type="term" value="F:protein disulfide isomerase activity"/>
    <property type="evidence" value="ECO:0007669"/>
    <property type="project" value="UniProtKB-EC"/>
</dbReference>
<dbReference type="GO" id="GO:0015035">
    <property type="term" value="F:protein-disulfide reductase activity"/>
    <property type="evidence" value="ECO:0000318"/>
    <property type="project" value="GO_Central"/>
</dbReference>
<dbReference type="GO" id="GO:0030968">
    <property type="term" value="P:endoplasmic reticulum unfolded protein response"/>
    <property type="evidence" value="ECO:0007007"/>
    <property type="project" value="WormBase"/>
</dbReference>
<dbReference type="GO" id="GO:1903895">
    <property type="term" value="P:negative regulation of IRE1-mediated unfolded protein response"/>
    <property type="evidence" value="ECO:0000315"/>
    <property type="project" value="WormBase"/>
</dbReference>
<dbReference type="GO" id="GO:0034976">
    <property type="term" value="P:response to endoplasmic reticulum stress"/>
    <property type="evidence" value="ECO:0000318"/>
    <property type="project" value="GO_Central"/>
</dbReference>
<dbReference type="CDD" id="cd02983">
    <property type="entry name" value="P5_C"/>
    <property type="match status" value="1"/>
</dbReference>
<dbReference type="CDD" id="cd03001">
    <property type="entry name" value="PDI_a_P5"/>
    <property type="match status" value="2"/>
</dbReference>
<dbReference type="FunFam" id="3.40.30.10:FF:000032">
    <property type="entry name" value="Protein disulfide-isomerase A6 homolog"/>
    <property type="match status" value="1"/>
</dbReference>
<dbReference type="FunFam" id="3.40.30.10:FF:000050">
    <property type="entry name" value="protein disulfide-isomerase A6 isoform X1"/>
    <property type="match status" value="1"/>
</dbReference>
<dbReference type="Gene3D" id="3.40.30.10">
    <property type="entry name" value="Glutaredoxin"/>
    <property type="match status" value="2"/>
</dbReference>
<dbReference type="InterPro" id="IPR005788">
    <property type="entry name" value="PDI_thioredoxin-like_dom"/>
</dbReference>
<dbReference type="InterPro" id="IPR036249">
    <property type="entry name" value="Thioredoxin-like_sf"/>
</dbReference>
<dbReference type="InterPro" id="IPR017937">
    <property type="entry name" value="Thioredoxin_CS"/>
</dbReference>
<dbReference type="InterPro" id="IPR013766">
    <property type="entry name" value="Thioredoxin_domain"/>
</dbReference>
<dbReference type="NCBIfam" id="TIGR01126">
    <property type="entry name" value="pdi_dom"/>
    <property type="match status" value="2"/>
</dbReference>
<dbReference type="PANTHER" id="PTHR45815">
    <property type="entry name" value="PROTEIN DISULFIDE-ISOMERASE A6"/>
    <property type="match status" value="1"/>
</dbReference>
<dbReference type="PANTHER" id="PTHR45815:SF3">
    <property type="entry name" value="PROTEIN DISULFIDE-ISOMERASE A6"/>
    <property type="match status" value="1"/>
</dbReference>
<dbReference type="Pfam" id="PF24541">
    <property type="entry name" value="Thioredox_PDIA6_C"/>
    <property type="match status" value="1"/>
</dbReference>
<dbReference type="Pfam" id="PF00085">
    <property type="entry name" value="Thioredoxin"/>
    <property type="match status" value="2"/>
</dbReference>
<dbReference type="PRINTS" id="PR00421">
    <property type="entry name" value="THIOREDOXIN"/>
</dbReference>
<dbReference type="SUPFAM" id="SSF52833">
    <property type="entry name" value="Thioredoxin-like"/>
    <property type="match status" value="3"/>
</dbReference>
<dbReference type="PROSITE" id="PS00194">
    <property type="entry name" value="THIOREDOXIN_1"/>
    <property type="match status" value="2"/>
</dbReference>
<dbReference type="PROSITE" id="PS51352">
    <property type="entry name" value="THIOREDOXIN_2"/>
    <property type="match status" value="2"/>
</dbReference>
<gene>
    <name evidence="7 9" type="primary">pdi-6</name>
    <name evidence="9" type="synonym">tag-320</name>
    <name evidence="9" type="ORF">B0403.4</name>
</gene>
<keyword id="KW-1015">Disulfide bond</keyword>
<keyword id="KW-0256">Endoplasmic reticulum</keyword>
<keyword id="KW-0413">Isomerase</keyword>
<keyword id="KW-0676">Redox-active center</keyword>
<keyword id="KW-1185">Reference proteome</keyword>
<keyword id="KW-0677">Repeat</keyword>
<keyword id="KW-0732">Signal</keyword>
<name>PDIA6_CAEEL</name>
<proteinExistence type="inferred from homology"/>
<organism>
    <name type="scientific">Caenorhabditis elegans</name>
    <dbReference type="NCBI Taxonomy" id="6239"/>
    <lineage>
        <taxon>Eukaryota</taxon>
        <taxon>Metazoa</taxon>
        <taxon>Ecdysozoa</taxon>
        <taxon>Nematoda</taxon>
        <taxon>Chromadorea</taxon>
        <taxon>Rhabditida</taxon>
        <taxon>Rhabditina</taxon>
        <taxon>Rhabditomorpha</taxon>
        <taxon>Rhabditoidea</taxon>
        <taxon>Rhabditidae</taxon>
        <taxon>Peloderinae</taxon>
        <taxon>Caenorhabditis</taxon>
    </lineage>
</organism>
<reference key="1">
    <citation type="journal article" date="1998" name="Science">
        <title>Genome sequence of the nematode C. elegans: a platform for investigating biology.</title>
        <authorList>
            <consortium name="The C. elegans sequencing consortium"/>
        </authorList>
    </citation>
    <scope>NUCLEOTIDE SEQUENCE [LARGE SCALE GENOMIC DNA]</scope>
    <source>
        <strain>Bristol N2</strain>
    </source>
</reference>
<reference key="2">
    <citation type="journal article" date="2014" name="Mol. Cell">
        <title>Protein disulfide isomerase A6 controls the decay of IRE1alpha signaling via disulfide-dependent association.</title>
        <authorList>
            <person name="Eletto D."/>
            <person name="Eletto D."/>
            <person name="Dersh D."/>
            <person name="Gidalevitz T."/>
            <person name="Argon Y."/>
        </authorList>
    </citation>
    <scope>FUNCTION</scope>
    <scope>DISRUPTION PHENOTYPE</scope>
</reference>
<feature type="signal peptide" evidence="3">
    <location>
        <begin position="1"/>
        <end position="18"/>
    </location>
</feature>
<feature type="chain" id="PRO_0000034241" description="Protein disulfide-isomerase A6 homolog" evidence="8">
    <location>
        <begin position="19"/>
        <end position="440"/>
    </location>
</feature>
<feature type="domain" description="Thioredoxin 1" evidence="4">
    <location>
        <begin position="19"/>
        <end position="131"/>
    </location>
</feature>
<feature type="domain" description="Thioredoxin 2" evidence="4">
    <location>
        <begin position="127"/>
        <end position="273"/>
    </location>
</feature>
<feature type="region of interest" description="Disordered" evidence="5">
    <location>
        <begin position="138"/>
        <end position="164"/>
    </location>
</feature>
<feature type="region of interest" description="Disordered" evidence="5">
    <location>
        <begin position="404"/>
        <end position="426"/>
    </location>
</feature>
<feature type="short sequence motif" description="Prevents secretion from ER" evidence="1">
    <location>
        <begin position="437"/>
        <end position="440"/>
    </location>
</feature>
<feature type="compositionally biased region" description="Low complexity" evidence="5">
    <location>
        <begin position="139"/>
        <end position="149"/>
    </location>
</feature>
<feature type="compositionally biased region" description="Gly residues" evidence="5">
    <location>
        <begin position="150"/>
        <end position="163"/>
    </location>
</feature>
<feature type="compositionally biased region" description="Basic and acidic residues" evidence="5">
    <location>
        <begin position="410"/>
        <end position="419"/>
    </location>
</feature>
<feature type="active site" description="Nucleophile" evidence="1">
    <location>
        <position position="54"/>
    </location>
</feature>
<feature type="active site" description="Nucleophile" evidence="1">
    <location>
        <position position="57"/>
    </location>
</feature>
<feature type="active site" description="Nucleophile" evidence="1">
    <location>
        <position position="194"/>
    </location>
</feature>
<feature type="active site" description="Nucleophile" evidence="1">
    <location>
        <position position="197"/>
    </location>
</feature>
<feature type="site" description="Contributes to redox potential value" evidence="1">
    <location>
        <position position="55"/>
    </location>
</feature>
<feature type="site" description="Contributes to redox potential value" evidence="1">
    <location>
        <position position="56"/>
    </location>
</feature>
<feature type="site" description="Lowers pKa of C-terminal Cys of first active site" evidence="1">
    <location>
        <position position="117"/>
    </location>
</feature>
<feature type="site" description="Contributes to redox potential value" evidence="1">
    <location>
        <position position="195"/>
    </location>
</feature>
<feature type="site" description="Contributes to redox potential value" evidence="1">
    <location>
        <position position="196"/>
    </location>
</feature>
<feature type="site" description="Lowers pKa of C-terminal Cys of second active site" evidence="1">
    <location>
        <position position="259"/>
    </location>
</feature>
<feature type="disulfide bond" description="Redox-active" evidence="4">
    <location>
        <begin position="54"/>
        <end position="57"/>
    </location>
</feature>
<feature type="disulfide bond" description="Redox-active" evidence="4">
    <location>
        <begin position="194"/>
        <end position="197"/>
    </location>
</feature>